<organism>
    <name type="scientific">Azotobacter vinelandii (strain DJ / ATCC BAA-1303)</name>
    <dbReference type="NCBI Taxonomy" id="322710"/>
    <lineage>
        <taxon>Bacteria</taxon>
        <taxon>Pseudomonadati</taxon>
        <taxon>Pseudomonadota</taxon>
        <taxon>Gammaproteobacteria</taxon>
        <taxon>Pseudomonadales</taxon>
        <taxon>Pseudomonadaceae</taxon>
        <taxon>Azotobacter</taxon>
    </lineage>
</organism>
<dbReference type="EC" id="2.4.1.227" evidence="1"/>
<dbReference type="EMBL" id="CP001157">
    <property type="protein sequence ID" value="ACO77551.1"/>
    <property type="molecule type" value="Genomic_DNA"/>
</dbReference>
<dbReference type="RefSeq" id="WP_012699971.1">
    <property type="nucleotide sequence ID" value="NC_012560.1"/>
</dbReference>
<dbReference type="SMR" id="C1DQ99"/>
<dbReference type="STRING" id="322710.Avin_13250"/>
<dbReference type="CAZy" id="GT28">
    <property type="family name" value="Glycosyltransferase Family 28"/>
</dbReference>
<dbReference type="EnsemblBacteria" id="ACO77551">
    <property type="protein sequence ID" value="ACO77551"/>
    <property type="gene ID" value="Avin_13250"/>
</dbReference>
<dbReference type="GeneID" id="88184641"/>
<dbReference type="KEGG" id="avn:Avin_13250"/>
<dbReference type="eggNOG" id="COG0707">
    <property type="taxonomic scope" value="Bacteria"/>
</dbReference>
<dbReference type="HOGENOM" id="CLU_037404_2_0_6"/>
<dbReference type="OrthoDB" id="9808936at2"/>
<dbReference type="UniPathway" id="UPA00219"/>
<dbReference type="Proteomes" id="UP000002424">
    <property type="component" value="Chromosome"/>
</dbReference>
<dbReference type="GO" id="GO:0005886">
    <property type="term" value="C:plasma membrane"/>
    <property type="evidence" value="ECO:0007669"/>
    <property type="project" value="UniProtKB-SubCell"/>
</dbReference>
<dbReference type="GO" id="GO:0051991">
    <property type="term" value="F:UDP-N-acetyl-D-glucosamine:N-acetylmuramoyl-L-alanyl-D-glutamyl-meso-2,6-diaminopimelyl-D-alanyl-D-alanine-diphosphoundecaprenol 4-beta-N-acetylglucosaminlytransferase activity"/>
    <property type="evidence" value="ECO:0007669"/>
    <property type="project" value="RHEA"/>
</dbReference>
<dbReference type="GO" id="GO:0050511">
    <property type="term" value="F:undecaprenyldiphospho-muramoylpentapeptide beta-N-acetylglucosaminyltransferase activity"/>
    <property type="evidence" value="ECO:0007669"/>
    <property type="project" value="UniProtKB-UniRule"/>
</dbReference>
<dbReference type="GO" id="GO:0005975">
    <property type="term" value="P:carbohydrate metabolic process"/>
    <property type="evidence" value="ECO:0007669"/>
    <property type="project" value="InterPro"/>
</dbReference>
<dbReference type="GO" id="GO:0051301">
    <property type="term" value="P:cell division"/>
    <property type="evidence" value="ECO:0007669"/>
    <property type="project" value="UniProtKB-KW"/>
</dbReference>
<dbReference type="GO" id="GO:0071555">
    <property type="term" value="P:cell wall organization"/>
    <property type="evidence" value="ECO:0007669"/>
    <property type="project" value="UniProtKB-KW"/>
</dbReference>
<dbReference type="GO" id="GO:0030259">
    <property type="term" value="P:lipid glycosylation"/>
    <property type="evidence" value="ECO:0007669"/>
    <property type="project" value="UniProtKB-UniRule"/>
</dbReference>
<dbReference type="GO" id="GO:0009252">
    <property type="term" value="P:peptidoglycan biosynthetic process"/>
    <property type="evidence" value="ECO:0007669"/>
    <property type="project" value="UniProtKB-UniRule"/>
</dbReference>
<dbReference type="GO" id="GO:0008360">
    <property type="term" value="P:regulation of cell shape"/>
    <property type="evidence" value="ECO:0007669"/>
    <property type="project" value="UniProtKB-KW"/>
</dbReference>
<dbReference type="CDD" id="cd03785">
    <property type="entry name" value="GT28_MurG"/>
    <property type="match status" value="1"/>
</dbReference>
<dbReference type="Gene3D" id="3.40.50.2000">
    <property type="entry name" value="Glycogen Phosphorylase B"/>
    <property type="match status" value="2"/>
</dbReference>
<dbReference type="HAMAP" id="MF_00033">
    <property type="entry name" value="MurG"/>
    <property type="match status" value="1"/>
</dbReference>
<dbReference type="InterPro" id="IPR006009">
    <property type="entry name" value="GlcNAc_MurG"/>
</dbReference>
<dbReference type="InterPro" id="IPR007235">
    <property type="entry name" value="Glyco_trans_28_C"/>
</dbReference>
<dbReference type="InterPro" id="IPR004276">
    <property type="entry name" value="GlycoTrans_28_N"/>
</dbReference>
<dbReference type="NCBIfam" id="TIGR01133">
    <property type="entry name" value="murG"/>
    <property type="match status" value="1"/>
</dbReference>
<dbReference type="PANTHER" id="PTHR21015:SF22">
    <property type="entry name" value="GLYCOSYLTRANSFERASE"/>
    <property type="match status" value="1"/>
</dbReference>
<dbReference type="PANTHER" id="PTHR21015">
    <property type="entry name" value="UDP-N-ACETYLGLUCOSAMINE--N-ACETYLMURAMYL-(PENTAPEPTIDE) PYROPHOSPHORYL-UNDECAPRENOL N-ACETYLGLUCOSAMINE TRANSFERASE 1"/>
    <property type="match status" value="1"/>
</dbReference>
<dbReference type="Pfam" id="PF04101">
    <property type="entry name" value="Glyco_tran_28_C"/>
    <property type="match status" value="1"/>
</dbReference>
<dbReference type="Pfam" id="PF03033">
    <property type="entry name" value="Glyco_transf_28"/>
    <property type="match status" value="1"/>
</dbReference>
<dbReference type="SUPFAM" id="SSF53756">
    <property type="entry name" value="UDP-Glycosyltransferase/glycogen phosphorylase"/>
    <property type="match status" value="1"/>
</dbReference>
<keyword id="KW-0131">Cell cycle</keyword>
<keyword id="KW-0132">Cell division</keyword>
<keyword id="KW-0997">Cell inner membrane</keyword>
<keyword id="KW-1003">Cell membrane</keyword>
<keyword id="KW-0133">Cell shape</keyword>
<keyword id="KW-0961">Cell wall biogenesis/degradation</keyword>
<keyword id="KW-0328">Glycosyltransferase</keyword>
<keyword id="KW-0472">Membrane</keyword>
<keyword id="KW-0573">Peptidoglycan synthesis</keyword>
<keyword id="KW-0808">Transferase</keyword>
<name>MURG_AZOVD</name>
<feature type="chain" id="PRO_1000202014" description="UDP-N-acetylglucosamine--N-acetylmuramyl-(pentapeptide) pyrophosphoryl-undecaprenol N-acetylglucosamine transferase">
    <location>
        <begin position="1"/>
        <end position="356"/>
    </location>
</feature>
<feature type="binding site" evidence="1">
    <location>
        <begin position="12"/>
        <end position="14"/>
    </location>
    <ligand>
        <name>UDP-N-acetyl-alpha-D-glucosamine</name>
        <dbReference type="ChEBI" id="CHEBI:57705"/>
    </ligand>
</feature>
<feature type="binding site" evidence="1">
    <location>
        <position position="124"/>
    </location>
    <ligand>
        <name>UDP-N-acetyl-alpha-D-glucosamine</name>
        <dbReference type="ChEBI" id="CHEBI:57705"/>
    </ligand>
</feature>
<feature type="binding site" evidence="1">
    <location>
        <position position="163"/>
    </location>
    <ligand>
        <name>UDP-N-acetyl-alpha-D-glucosamine</name>
        <dbReference type="ChEBI" id="CHEBI:57705"/>
    </ligand>
</feature>
<feature type="binding site" evidence="1">
    <location>
        <position position="188"/>
    </location>
    <ligand>
        <name>UDP-N-acetyl-alpha-D-glucosamine</name>
        <dbReference type="ChEBI" id="CHEBI:57705"/>
    </ligand>
</feature>
<feature type="binding site" evidence="1">
    <location>
        <position position="242"/>
    </location>
    <ligand>
        <name>UDP-N-acetyl-alpha-D-glucosamine</name>
        <dbReference type="ChEBI" id="CHEBI:57705"/>
    </ligand>
</feature>
<feature type="binding site" evidence="1">
    <location>
        <begin position="261"/>
        <end position="266"/>
    </location>
    <ligand>
        <name>UDP-N-acetyl-alpha-D-glucosamine</name>
        <dbReference type="ChEBI" id="CHEBI:57705"/>
    </ligand>
</feature>
<feature type="binding site" evidence="1">
    <location>
        <position position="287"/>
    </location>
    <ligand>
        <name>UDP-N-acetyl-alpha-D-glucosamine</name>
        <dbReference type="ChEBI" id="CHEBI:57705"/>
    </ligand>
</feature>
<proteinExistence type="inferred from homology"/>
<evidence type="ECO:0000255" key="1">
    <source>
        <dbReference type="HAMAP-Rule" id="MF_00033"/>
    </source>
</evidence>
<accession>C1DQ99</accession>
<reference key="1">
    <citation type="journal article" date="2009" name="J. Bacteriol.">
        <title>Genome sequence of Azotobacter vinelandii, an obligate aerobe specialized to support diverse anaerobic metabolic processes.</title>
        <authorList>
            <person name="Setubal J.C."/>
            <person name="Dos Santos P."/>
            <person name="Goldman B.S."/>
            <person name="Ertesvaag H."/>
            <person name="Espin G."/>
            <person name="Rubio L.M."/>
            <person name="Valla S."/>
            <person name="Almeida N.F."/>
            <person name="Balasubramanian D."/>
            <person name="Cromes L."/>
            <person name="Curatti L."/>
            <person name="Du Z."/>
            <person name="Godsy E."/>
            <person name="Goodner B."/>
            <person name="Hellner-Burris K."/>
            <person name="Hernandez J.A."/>
            <person name="Houmiel K."/>
            <person name="Imperial J."/>
            <person name="Kennedy C."/>
            <person name="Larson T.J."/>
            <person name="Latreille P."/>
            <person name="Ligon L.S."/>
            <person name="Lu J."/>
            <person name="Maerk M."/>
            <person name="Miller N.M."/>
            <person name="Norton S."/>
            <person name="O'Carroll I.P."/>
            <person name="Paulsen I."/>
            <person name="Raulfs E.C."/>
            <person name="Roemer R."/>
            <person name="Rosser J."/>
            <person name="Segura D."/>
            <person name="Slater S."/>
            <person name="Stricklin S.L."/>
            <person name="Studholme D.J."/>
            <person name="Sun J."/>
            <person name="Viana C.J."/>
            <person name="Wallin E."/>
            <person name="Wang B."/>
            <person name="Wheeler C."/>
            <person name="Zhu H."/>
            <person name="Dean D.R."/>
            <person name="Dixon R."/>
            <person name="Wood D."/>
        </authorList>
    </citation>
    <scope>NUCLEOTIDE SEQUENCE [LARGE SCALE GENOMIC DNA]</scope>
    <source>
        <strain>DJ / ATCC BAA-1303</strain>
    </source>
</reference>
<sequence>MGANVLIMAGGTGGHVFPALACAREFQARGYAVHWLGTPRGIENDLVPSAGLPLHRIQIGGLRGKGLATLLKAPFQLIRSLFQARRIMNELRPVCVLGMGGFVTGPGGVAAKLTGAPLVIHEQNAVAGTSNRALAPLADRICEAFPDTFKPTGKRRTTGNPVRSELFLDSSRQIPDGRRLRLLVLGGSLGAEPLNKLLPAALALIPVEQRPELFHQAGRQHHESTADRYREAGVEAEVVPFIEDMARVYAWADLVVCRAGALTVSELAAAGLPALLVPLPHAIDDHQTRNADYLAREGAAFLLPQATTTAADLAARLSEVSMHPEQLEGMAARARRLAKPDATRTVVDICLEVARG</sequence>
<protein>
    <recommendedName>
        <fullName evidence="1">UDP-N-acetylglucosamine--N-acetylmuramyl-(pentapeptide) pyrophosphoryl-undecaprenol N-acetylglucosamine transferase</fullName>
        <ecNumber evidence="1">2.4.1.227</ecNumber>
    </recommendedName>
    <alternativeName>
        <fullName evidence="1">Undecaprenyl-PP-MurNAc-pentapeptide-UDPGlcNAc GlcNAc transferase</fullName>
    </alternativeName>
</protein>
<gene>
    <name evidence="1" type="primary">murG</name>
    <name type="ordered locus">Avin_13250</name>
</gene>
<comment type="function">
    <text evidence="1">Cell wall formation. Catalyzes the transfer of a GlcNAc subunit on undecaprenyl-pyrophosphoryl-MurNAc-pentapeptide (lipid intermediate I) to form undecaprenyl-pyrophosphoryl-MurNAc-(pentapeptide)GlcNAc (lipid intermediate II).</text>
</comment>
<comment type="catalytic activity">
    <reaction evidence="1">
        <text>di-trans,octa-cis-undecaprenyl diphospho-N-acetyl-alpha-D-muramoyl-L-alanyl-D-glutamyl-meso-2,6-diaminopimeloyl-D-alanyl-D-alanine + UDP-N-acetyl-alpha-D-glucosamine = di-trans,octa-cis-undecaprenyl diphospho-[N-acetyl-alpha-D-glucosaminyl-(1-&gt;4)]-N-acetyl-alpha-D-muramoyl-L-alanyl-D-glutamyl-meso-2,6-diaminopimeloyl-D-alanyl-D-alanine + UDP + H(+)</text>
        <dbReference type="Rhea" id="RHEA:31227"/>
        <dbReference type="ChEBI" id="CHEBI:15378"/>
        <dbReference type="ChEBI" id="CHEBI:57705"/>
        <dbReference type="ChEBI" id="CHEBI:58223"/>
        <dbReference type="ChEBI" id="CHEBI:61387"/>
        <dbReference type="ChEBI" id="CHEBI:61388"/>
        <dbReference type="EC" id="2.4.1.227"/>
    </reaction>
</comment>
<comment type="pathway">
    <text evidence="1">Cell wall biogenesis; peptidoglycan biosynthesis.</text>
</comment>
<comment type="subcellular location">
    <subcellularLocation>
        <location evidence="1">Cell inner membrane</location>
        <topology evidence="1">Peripheral membrane protein</topology>
        <orientation evidence="1">Cytoplasmic side</orientation>
    </subcellularLocation>
</comment>
<comment type="similarity">
    <text evidence="1">Belongs to the glycosyltransferase 28 family. MurG subfamily.</text>
</comment>